<reference key="1">
    <citation type="submission" date="2007-07" db="EMBL/GenBank/DDBJ databases">
        <authorList>
            <consortium name="NIH - Mammalian Gene Collection (MGC) project"/>
        </authorList>
    </citation>
    <scope>NUCLEOTIDE SEQUENCE [LARGE SCALE MRNA]</scope>
    <source>
        <strain>Hereford</strain>
        <tissue>Fetal skin</tissue>
    </source>
</reference>
<keyword id="KW-1185">Reference proteome</keyword>
<keyword id="KW-0964">Secreted</keyword>
<keyword id="KW-0732">Signal</keyword>
<evidence type="ECO:0000250" key="1"/>
<evidence type="ECO:0000255" key="2"/>
<evidence type="ECO:0000256" key="3">
    <source>
        <dbReference type="SAM" id="MobiDB-lite"/>
    </source>
</evidence>
<name>SBSN_BOVIN</name>
<protein>
    <recommendedName>
        <fullName>Suprabasin</fullName>
    </recommendedName>
</protein>
<feature type="signal peptide" evidence="2">
    <location>
        <begin position="1"/>
        <end position="23"/>
    </location>
</feature>
<feature type="chain" id="PRO_0000317119" description="Suprabasin">
    <location>
        <begin position="24"/>
        <end position="557"/>
    </location>
</feature>
<feature type="region of interest" description="Disordered" evidence="3">
    <location>
        <begin position="150"/>
        <end position="175"/>
    </location>
</feature>
<feature type="region of interest" description="Disordered" evidence="3">
    <location>
        <begin position="422"/>
        <end position="441"/>
    </location>
</feature>
<feature type="region of interest" description="Disordered" evidence="3">
    <location>
        <begin position="464"/>
        <end position="490"/>
    </location>
</feature>
<feature type="region of interest" description="Disordered" evidence="3">
    <location>
        <begin position="509"/>
        <end position="533"/>
    </location>
</feature>
<feature type="compositionally biased region" description="Low complexity" evidence="3">
    <location>
        <begin position="153"/>
        <end position="175"/>
    </location>
</feature>
<feature type="compositionally biased region" description="Low complexity" evidence="3">
    <location>
        <begin position="476"/>
        <end position="487"/>
    </location>
</feature>
<dbReference type="EMBL" id="BC149806">
    <property type="protein sequence ID" value="AAI49807.1"/>
    <property type="molecule type" value="mRNA"/>
</dbReference>
<dbReference type="RefSeq" id="NP_001098467.1">
    <property type="nucleotide sequence ID" value="NM_001104997.1"/>
</dbReference>
<dbReference type="STRING" id="9913.ENSBTAP00000032173"/>
<dbReference type="PaxDb" id="9913-ENSBTAP00000032173"/>
<dbReference type="PeptideAtlas" id="A6QQF6"/>
<dbReference type="GeneID" id="540452"/>
<dbReference type="KEGG" id="bta:540452"/>
<dbReference type="CTD" id="374897"/>
<dbReference type="VEuPathDB" id="HostDB:ENSBTAG00000015915"/>
<dbReference type="eggNOG" id="ENOG502SGZY">
    <property type="taxonomic scope" value="Eukaryota"/>
</dbReference>
<dbReference type="HOGENOM" id="CLU_033163_0_0_1"/>
<dbReference type="InParanoid" id="A6QQF6"/>
<dbReference type="OMA" id="THHAFGQ"/>
<dbReference type="OrthoDB" id="9836354at2759"/>
<dbReference type="TreeFam" id="TF351767"/>
<dbReference type="Proteomes" id="UP000009136">
    <property type="component" value="Chromosome 18"/>
</dbReference>
<dbReference type="Bgee" id="ENSBTAG00000015915">
    <property type="expression patterns" value="Expressed in surface of tongue and 63 other cell types or tissues"/>
</dbReference>
<dbReference type="GO" id="GO:0005576">
    <property type="term" value="C:extracellular region"/>
    <property type="evidence" value="ECO:0007669"/>
    <property type="project" value="UniProtKB-SubCell"/>
</dbReference>
<dbReference type="InterPro" id="IPR049502">
    <property type="entry name" value="SBSN_GxHH_rpt"/>
</dbReference>
<dbReference type="InterPro" id="IPR024153">
    <property type="entry name" value="Suprabasin"/>
</dbReference>
<dbReference type="PANTHER" id="PTHR23243">
    <property type="entry name" value="SUPRABASAL-SPECIFIC PROTEIN SUPRABASIN"/>
    <property type="match status" value="1"/>
</dbReference>
<dbReference type="PANTHER" id="PTHR23243:SF3">
    <property type="entry name" value="SUPRABASIN"/>
    <property type="match status" value="1"/>
</dbReference>
<dbReference type="Pfam" id="PF21009">
    <property type="entry name" value="SBSN_GxHH_rpt"/>
    <property type="match status" value="2"/>
</dbReference>
<proteinExistence type="evidence at transcript level"/>
<comment type="subcellular location">
    <subcellularLocation>
        <location evidence="1">Secreted</location>
    </subcellularLocation>
</comment>
<organism>
    <name type="scientific">Bos taurus</name>
    <name type="common">Bovine</name>
    <dbReference type="NCBI Taxonomy" id="9913"/>
    <lineage>
        <taxon>Eukaryota</taxon>
        <taxon>Metazoa</taxon>
        <taxon>Chordata</taxon>
        <taxon>Craniata</taxon>
        <taxon>Vertebrata</taxon>
        <taxon>Euteleostomi</taxon>
        <taxon>Mammalia</taxon>
        <taxon>Eutheria</taxon>
        <taxon>Laurasiatheria</taxon>
        <taxon>Artiodactyla</taxon>
        <taxon>Ruminantia</taxon>
        <taxon>Pecora</taxon>
        <taxon>Bovidae</taxon>
        <taxon>Bovinae</taxon>
        <taxon>Bos</taxon>
    </lineage>
</organism>
<sequence length="557" mass="56854">MHLASLLSSCSLLLLLGALPGWAANNDPIEKVIEGINRGLSSAEREVGKALEGINNGITQAGREVEKVFNGLSSMGNQAGKELEKGVQGLNRGLDKVAHGINNGVGHTGKEAEKLAHGVNHAAGQVGKEADTVIQGVPHGVNQAGSDAGRFGQGAHHATGQAGKEAEKFGQGAHHAAGQFGNEAEKFGQGAHHAAGQFGNEAEKFGQGVHHAAGQFGNEAEKFGQGVHHAAGQAGKEGEKIVQGVQHGVNQAGKEAEKFGQGVHHGAGQFGNEAEKFGQGVHHAAGQAGKEGEKIVQGVQHGVNQAGKEAEKFGQGVHHGAGQFGNEAEKFGQGVHHAAGQAGKEGEKIVQGVQHGVNQAGKEAEKFGKDVHYAAGQAGKEGEKIVQGVQHGVNQAGKEAEKFGQGVHHAAGQFGKEAEKFGQGAHHAAEQAGKQAGKVAQGVHDGVNQAGKEAEKLGHGVNHAAGQAGKEAEKLGQGVHHAAGQAGKQEDRLQQNVHNGVNQAGKEANQLLNDGHPGGSTTQHGGAATTTLTSGASVNKPFMALSVLWKSVTSIIP</sequence>
<accession>A6QQF6</accession>
<gene>
    <name type="primary">SBSN</name>
</gene>